<keyword id="KW-0030">Aminoacyl-tRNA synthetase</keyword>
<keyword id="KW-0067">ATP-binding</keyword>
<keyword id="KW-0963">Cytoplasm</keyword>
<keyword id="KW-0436">Ligase</keyword>
<keyword id="KW-0547">Nucleotide-binding</keyword>
<keyword id="KW-0648">Protein biosynthesis</keyword>
<keyword id="KW-0694">RNA-binding</keyword>
<proteinExistence type="inferred from homology"/>
<dbReference type="EC" id="6.1.1.1" evidence="1"/>
<dbReference type="EMBL" id="CP001033">
    <property type="protein sequence ID" value="ACB91317.1"/>
    <property type="molecule type" value="Genomic_DNA"/>
</dbReference>
<dbReference type="RefSeq" id="WP_000546878.1">
    <property type="nucleotide sequence ID" value="NC_010582.1"/>
</dbReference>
<dbReference type="SMR" id="B2IN18"/>
<dbReference type="KEGG" id="spw:SPCG_2065"/>
<dbReference type="HOGENOM" id="CLU_024003_0_3_9"/>
<dbReference type="GO" id="GO:0005829">
    <property type="term" value="C:cytosol"/>
    <property type="evidence" value="ECO:0007669"/>
    <property type="project" value="TreeGrafter"/>
</dbReference>
<dbReference type="GO" id="GO:0005524">
    <property type="term" value="F:ATP binding"/>
    <property type="evidence" value="ECO:0007669"/>
    <property type="project" value="UniProtKB-UniRule"/>
</dbReference>
<dbReference type="GO" id="GO:0003723">
    <property type="term" value="F:RNA binding"/>
    <property type="evidence" value="ECO:0007669"/>
    <property type="project" value="UniProtKB-KW"/>
</dbReference>
<dbReference type="GO" id="GO:0004831">
    <property type="term" value="F:tyrosine-tRNA ligase activity"/>
    <property type="evidence" value="ECO:0007669"/>
    <property type="project" value="UniProtKB-UniRule"/>
</dbReference>
<dbReference type="GO" id="GO:0006437">
    <property type="term" value="P:tyrosyl-tRNA aminoacylation"/>
    <property type="evidence" value="ECO:0007669"/>
    <property type="project" value="UniProtKB-UniRule"/>
</dbReference>
<dbReference type="CDD" id="cd00165">
    <property type="entry name" value="S4"/>
    <property type="match status" value="1"/>
</dbReference>
<dbReference type="CDD" id="cd00805">
    <property type="entry name" value="TyrRS_core"/>
    <property type="match status" value="1"/>
</dbReference>
<dbReference type="FunFam" id="1.10.240.10:FF:000001">
    <property type="entry name" value="Tyrosine--tRNA ligase"/>
    <property type="match status" value="1"/>
</dbReference>
<dbReference type="FunFam" id="3.10.290.10:FF:000012">
    <property type="entry name" value="Tyrosine--tRNA ligase"/>
    <property type="match status" value="1"/>
</dbReference>
<dbReference type="FunFam" id="3.40.50.620:FF:000008">
    <property type="entry name" value="Tyrosine--tRNA ligase"/>
    <property type="match status" value="1"/>
</dbReference>
<dbReference type="Gene3D" id="3.40.50.620">
    <property type="entry name" value="HUPs"/>
    <property type="match status" value="1"/>
</dbReference>
<dbReference type="Gene3D" id="3.10.290.10">
    <property type="entry name" value="RNA-binding S4 domain"/>
    <property type="match status" value="1"/>
</dbReference>
<dbReference type="Gene3D" id="1.10.240.10">
    <property type="entry name" value="Tyrosyl-Transfer RNA Synthetase"/>
    <property type="match status" value="1"/>
</dbReference>
<dbReference type="HAMAP" id="MF_02006">
    <property type="entry name" value="Tyr_tRNA_synth_type1"/>
    <property type="match status" value="1"/>
</dbReference>
<dbReference type="InterPro" id="IPR001412">
    <property type="entry name" value="aa-tRNA-synth_I_CS"/>
</dbReference>
<dbReference type="InterPro" id="IPR002305">
    <property type="entry name" value="aa-tRNA-synth_Ic"/>
</dbReference>
<dbReference type="InterPro" id="IPR014729">
    <property type="entry name" value="Rossmann-like_a/b/a_fold"/>
</dbReference>
<dbReference type="InterPro" id="IPR002942">
    <property type="entry name" value="S4_RNA-bd"/>
</dbReference>
<dbReference type="InterPro" id="IPR036986">
    <property type="entry name" value="S4_RNA-bd_sf"/>
</dbReference>
<dbReference type="InterPro" id="IPR054608">
    <property type="entry name" value="SYY-like_C"/>
</dbReference>
<dbReference type="InterPro" id="IPR002307">
    <property type="entry name" value="Tyr-tRNA-ligase"/>
</dbReference>
<dbReference type="InterPro" id="IPR024088">
    <property type="entry name" value="Tyr-tRNA-ligase_bac-type"/>
</dbReference>
<dbReference type="InterPro" id="IPR024107">
    <property type="entry name" value="Tyr-tRNA-ligase_bac_1"/>
</dbReference>
<dbReference type="NCBIfam" id="TIGR00234">
    <property type="entry name" value="tyrS"/>
    <property type="match status" value="1"/>
</dbReference>
<dbReference type="PANTHER" id="PTHR11766:SF0">
    <property type="entry name" value="TYROSINE--TRNA LIGASE, MITOCHONDRIAL"/>
    <property type="match status" value="1"/>
</dbReference>
<dbReference type="PANTHER" id="PTHR11766">
    <property type="entry name" value="TYROSYL-TRNA SYNTHETASE"/>
    <property type="match status" value="1"/>
</dbReference>
<dbReference type="Pfam" id="PF22421">
    <property type="entry name" value="SYY_C-terminal"/>
    <property type="match status" value="1"/>
</dbReference>
<dbReference type="Pfam" id="PF00579">
    <property type="entry name" value="tRNA-synt_1b"/>
    <property type="match status" value="1"/>
</dbReference>
<dbReference type="PRINTS" id="PR01040">
    <property type="entry name" value="TRNASYNTHTYR"/>
</dbReference>
<dbReference type="SMART" id="SM00363">
    <property type="entry name" value="S4"/>
    <property type="match status" value="1"/>
</dbReference>
<dbReference type="SUPFAM" id="SSF55174">
    <property type="entry name" value="Alpha-L RNA-binding motif"/>
    <property type="match status" value="1"/>
</dbReference>
<dbReference type="SUPFAM" id="SSF52374">
    <property type="entry name" value="Nucleotidylyl transferase"/>
    <property type="match status" value="1"/>
</dbReference>
<dbReference type="PROSITE" id="PS00178">
    <property type="entry name" value="AA_TRNA_LIGASE_I"/>
    <property type="match status" value="1"/>
</dbReference>
<dbReference type="PROSITE" id="PS50889">
    <property type="entry name" value="S4"/>
    <property type="match status" value="1"/>
</dbReference>
<gene>
    <name evidence="1" type="primary">tyrS</name>
    <name type="ordered locus">SPCG_2065</name>
</gene>
<name>SYY_STRPS</name>
<sequence>MHIFDELKERGLIFQTTDEEALRKALEEGQVSYYTGYDPTADSLHLGHLVAILTSRRLQLAGHKPYALVGGATGLIGDPSFKDAERSLQTKDTVDGWVKSIQGQLSRFLDFENGENKAVMVNNYDWFGSISFIDFLRDIGKYFTVNYMMSKESVKKRIETGISYTEFAYQIMQGYDFFVLNQDHNVTLQIGGSDQWGNMTAGTELLRRKADKTGHVITVPLITDATGKKFGKSEGNAVWLNPEKTSPYEMYQFWMNVMDADAIRFLKIFTFLSLDEIEDIRKQFEAAPHERLAQKVLAREVVTLVHGEEAYKEALNITEQLFAGNIKNLSVKELKQGLRGVPNYQVQADENNNIVELLVSSGIVNSKRQAREDVQNGAIYVNGDRIQDLDYVLSDADKLENELTVIRRGKKKYFVLTY</sequence>
<reference key="1">
    <citation type="journal article" date="2009" name="BMC Genomics">
        <title>Genome evolution driven by host adaptations results in a more virulent and antimicrobial-resistant Streptococcus pneumoniae serotype 14.</title>
        <authorList>
            <person name="Ding F."/>
            <person name="Tang P."/>
            <person name="Hsu M.-H."/>
            <person name="Cui P."/>
            <person name="Hu S."/>
            <person name="Yu J."/>
            <person name="Chiu C.-H."/>
        </authorList>
    </citation>
    <scope>NUCLEOTIDE SEQUENCE [LARGE SCALE GENOMIC DNA]</scope>
    <source>
        <strain>CGSP14</strain>
    </source>
</reference>
<organism>
    <name type="scientific">Streptococcus pneumoniae (strain CGSP14)</name>
    <dbReference type="NCBI Taxonomy" id="516950"/>
    <lineage>
        <taxon>Bacteria</taxon>
        <taxon>Bacillati</taxon>
        <taxon>Bacillota</taxon>
        <taxon>Bacilli</taxon>
        <taxon>Lactobacillales</taxon>
        <taxon>Streptococcaceae</taxon>
        <taxon>Streptococcus</taxon>
    </lineage>
</organism>
<evidence type="ECO:0000255" key="1">
    <source>
        <dbReference type="HAMAP-Rule" id="MF_02006"/>
    </source>
</evidence>
<feature type="chain" id="PRO_1000216280" description="Tyrosine--tRNA ligase">
    <location>
        <begin position="1"/>
        <end position="418"/>
    </location>
</feature>
<feature type="domain" description="S4 RNA-binding" evidence="1">
    <location>
        <begin position="352"/>
        <end position="418"/>
    </location>
</feature>
<feature type="short sequence motif" description="'HIGH' region">
    <location>
        <begin position="39"/>
        <end position="48"/>
    </location>
</feature>
<feature type="short sequence motif" description="'KMSKS' region">
    <location>
        <begin position="229"/>
        <end position="233"/>
    </location>
</feature>
<feature type="binding site" evidence="1">
    <location>
        <position position="34"/>
    </location>
    <ligand>
        <name>L-tyrosine</name>
        <dbReference type="ChEBI" id="CHEBI:58315"/>
    </ligand>
</feature>
<feature type="binding site" evidence="1">
    <location>
        <position position="169"/>
    </location>
    <ligand>
        <name>L-tyrosine</name>
        <dbReference type="ChEBI" id="CHEBI:58315"/>
    </ligand>
</feature>
<feature type="binding site" evidence="1">
    <location>
        <position position="173"/>
    </location>
    <ligand>
        <name>L-tyrosine</name>
        <dbReference type="ChEBI" id="CHEBI:58315"/>
    </ligand>
</feature>
<feature type="binding site" evidence="1">
    <location>
        <position position="232"/>
    </location>
    <ligand>
        <name>ATP</name>
        <dbReference type="ChEBI" id="CHEBI:30616"/>
    </ligand>
</feature>
<accession>B2IN18</accession>
<comment type="function">
    <text evidence="1">Catalyzes the attachment of tyrosine to tRNA(Tyr) in a two-step reaction: tyrosine is first activated by ATP to form Tyr-AMP and then transferred to the acceptor end of tRNA(Tyr).</text>
</comment>
<comment type="catalytic activity">
    <reaction evidence="1">
        <text>tRNA(Tyr) + L-tyrosine + ATP = L-tyrosyl-tRNA(Tyr) + AMP + diphosphate + H(+)</text>
        <dbReference type="Rhea" id="RHEA:10220"/>
        <dbReference type="Rhea" id="RHEA-COMP:9706"/>
        <dbReference type="Rhea" id="RHEA-COMP:9707"/>
        <dbReference type="ChEBI" id="CHEBI:15378"/>
        <dbReference type="ChEBI" id="CHEBI:30616"/>
        <dbReference type="ChEBI" id="CHEBI:33019"/>
        <dbReference type="ChEBI" id="CHEBI:58315"/>
        <dbReference type="ChEBI" id="CHEBI:78442"/>
        <dbReference type="ChEBI" id="CHEBI:78536"/>
        <dbReference type="ChEBI" id="CHEBI:456215"/>
        <dbReference type="EC" id="6.1.1.1"/>
    </reaction>
</comment>
<comment type="subunit">
    <text evidence="1">Homodimer.</text>
</comment>
<comment type="subcellular location">
    <subcellularLocation>
        <location evidence="1">Cytoplasm</location>
    </subcellularLocation>
</comment>
<comment type="similarity">
    <text evidence="1">Belongs to the class-I aminoacyl-tRNA synthetase family. TyrS type 1 subfamily.</text>
</comment>
<protein>
    <recommendedName>
        <fullName evidence="1">Tyrosine--tRNA ligase</fullName>
        <ecNumber evidence="1">6.1.1.1</ecNumber>
    </recommendedName>
    <alternativeName>
        <fullName evidence="1">Tyrosyl-tRNA synthetase</fullName>
        <shortName evidence="1">TyrRS</shortName>
    </alternativeName>
</protein>